<reference key="1">
    <citation type="journal article" date="1996" name="Science">
        <title>Complete genome sequence of the methanogenic archaeon, Methanococcus jannaschii.</title>
        <authorList>
            <person name="Bult C.J."/>
            <person name="White O."/>
            <person name="Olsen G.J."/>
            <person name="Zhou L."/>
            <person name="Fleischmann R.D."/>
            <person name="Sutton G.G."/>
            <person name="Blake J.A."/>
            <person name="FitzGerald L.M."/>
            <person name="Clayton R.A."/>
            <person name="Gocayne J.D."/>
            <person name="Kerlavage A.R."/>
            <person name="Dougherty B.A."/>
            <person name="Tomb J.-F."/>
            <person name="Adams M.D."/>
            <person name="Reich C.I."/>
            <person name="Overbeek R."/>
            <person name="Kirkness E.F."/>
            <person name="Weinstock K.G."/>
            <person name="Merrick J.M."/>
            <person name="Glodek A."/>
            <person name="Scott J.L."/>
            <person name="Geoghagen N.S.M."/>
            <person name="Weidman J.F."/>
            <person name="Fuhrmann J.L."/>
            <person name="Nguyen D."/>
            <person name="Utterback T.R."/>
            <person name="Kelley J.M."/>
            <person name="Peterson J.D."/>
            <person name="Sadow P.W."/>
            <person name="Hanna M.C."/>
            <person name="Cotton M.D."/>
            <person name="Roberts K.M."/>
            <person name="Hurst M.A."/>
            <person name="Kaine B.P."/>
            <person name="Borodovsky M."/>
            <person name="Klenk H.-P."/>
            <person name="Fraser C.M."/>
            <person name="Smith H.O."/>
            <person name="Woese C.R."/>
            <person name="Venter J.C."/>
        </authorList>
    </citation>
    <scope>NUCLEOTIDE SEQUENCE [LARGE SCALE GENOMIC DNA]</scope>
    <source>
        <strain>ATCC 43067 / DSM 2661 / JAL-1 / JCM 10045 / NBRC 100440</strain>
    </source>
</reference>
<keyword id="KW-1185">Reference proteome</keyword>
<name>Y1618_METJA</name>
<organism>
    <name type="scientific">Methanocaldococcus jannaschii (strain ATCC 43067 / DSM 2661 / JAL-1 / JCM 10045 / NBRC 100440)</name>
    <name type="common">Methanococcus jannaschii</name>
    <dbReference type="NCBI Taxonomy" id="243232"/>
    <lineage>
        <taxon>Archaea</taxon>
        <taxon>Methanobacteriati</taxon>
        <taxon>Methanobacteriota</taxon>
        <taxon>Methanomada group</taxon>
        <taxon>Methanococci</taxon>
        <taxon>Methanococcales</taxon>
        <taxon>Methanocaldococcaceae</taxon>
        <taxon>Methanocaldococcus</taxon>
    </lineage>
</organism>
<accession>Q59013</accession>
<gene>
    <name type="ordered locus">MJ1618</name>
</gene>
<evidence type="ECO:0000255" key="1"/>
<sequence length="125" mass="14376">MITMKIIKTEYDKIKPYITKDGSIIRELLHPNIYKGVKQSLAEAIVPVGSKTLLHKHYTSEEIYYILEGRGLMTLDNEKFEVKKGDTIYIPPKTPHKIENIGNVPLKILCCSYPPYSHEDTEILE</sequence>
<dbReference type="EMBL" id="L77117">
    <property type="protein sequence ID" value="AAB99639.1"/>
    <property type="molecule type" value="Genomic_DNA"/>
</dbReference>
<dbReference type="PIR" id="A64502">
    <property type="entry name" value="A64502"/>
</dbReference>
<dbReference type="SMR" id="Q59013"/>
<dbReference type="STRING" id="243232.MJ_1618"/>
<dbReference type="PaxDb" id="243232-MJ_1618"/>
<dbReference type="EnsemblBacteria" id="AAB99639">
    <property type="protein sequence ID" value="AAB99639"/>
    <property type="gene ID" value="MJ_1618"/>
</dbReference>
<dbReference type="KEGG" id="mja:MJ_1618"/>
<dbReference type="eggNOG" id="arCOG03003">
    <property type="taxonomic scope" value="Archaea"/>
</dbReference>
<dbReference type="HOGENOM" id="CLU_129810_1_1_2"/>
<dbReference type="InParanoid" id="Q59013"/>
<dbReference type="PhylomeDB" id="Q59013"/>
<dbReference type="Proteomes" id="UP000000805">
    <property type="component" value="Chromosome"/>
</dbReference>
<dbReference type="CDD" id="cd02214">
    <property type="entry name" value="cupin_MJ1618"/>
    <property type="match status" value="1"/>
</dbReference>
<dbReference type="Gene3D" id="2.60.120.10">
    <property type="entry name" value="Jelly Rolls"/>
    <property type="match status" value="1"/>
</dbReference>
<dbReference type="InterPro" id="IPR013096">
    <property type="entry name" value="Cupin_2"/>
</dbReference>
<dbReference type="InterPro" id="IPR052044">
    <property type="entry name" value="PKS_Associated_Protein"/>
</dbReference>
<dbReference type="InterPro" id="IPR014710">
    <property type="entry name" value="RmlC-like_jellyroll"/>
</dbReference>
<dbReference type="InterPro" id="IPR011051">
    <property type="entry name" value="RmlC_Cupin_sf"/>
</dbReference>
<dbReference type="PANTHER" id="PTHR36114">
    <property type="entry name" value="16.7 KDA PROTEIN IN WHIE LOCUS"/>
    <property type="match status" value="1"/>
</dbReference>
<dbReference type="PANTHER" id="PTHR36114:SF4">
    <property type="entry name" value="CUPIN 2 CONSERVED BARREL DOMAIN-CONTAINING PROTEIN"/>
    <property type="match status" value="1"/>
</dbReference>
<dbReference type="Pfam" id="PF07883">
    <property type="entry name" value="Cupin_2"/>
    <property type="match status" value="1"/>
</dbReference>
<dbReference type="SUPFAM" id="SSF51182">
    <property type="entry name" value="RmlC-like cupins"/>
    <property type="match status" value="1"/>
</dbReference>
<protein>
    <recommendedName>
        <fullName>Uncharacterized protein MJ1618</fullName>
    </recommendedName>
</protein>
<proteinExistence type="predicted"/>
<feature type="chain" id="PRO_0000107440" description="Uncharacterized protein MJ1618">
    <location>
        <begin position="1"/>
        <end position="125"/>
    </location>
</feature>
<feature type="domain" description="Cupin type-2" evidence="1">
    <location>
        <begin position="45"/>
        <end position="110"/>
    </location>
</feature>